<feature type="chain" id="PRO_1000142881" description="Large ribosomal subunit protein uL15">
    <location>
        <begin position="1"/>
        <end position="144"/>
    </location>
</feature>
<feature type="region of interest" description="Disordered" evidence="2">
    <location>
        <begin position="1"/>
        <end position="48"/>
    </location>
</feature>
<feature type="compositionally biased region" description="Gly residues" evidence="2">
    <location>
        <begin position="21"/>
        <end position="31"/>
    </location>
</feature>
<keyword id="KW-1185">Reference proteome</keyword>
<keyword id="KW-0687">Ribonucleoprotein</keyword>
<keyword id="KW-0689">Ribosomal protein</keyword>
<keyword id="KW-0694">RNA-binding</keyword>
<keyword id="KW-0699">rRNA-binding</keyword>
<gene>
    <name evidence="1" type="primary">rplO</name>
    <name type="ordered locus">Swoo_4671</name>
</gene>
<proteinExistence type="inferred from homology"/>
<protein>
    <recommendedName>
        <fullName evidence="1">Large ribosomal subunit protein uL15</fullName>
    </recommendedName>
    <alternativeName>
        <fullName evidence="3">50S ribosomal protein L15</fullName>
    </alternativeName>
</protein>
<evidence type="ECO:0000255" key="1">
    <source>
        <dbReference type="HAMAP-Rule" id="MF_01341"/>
    </source>
</evidence>
<evidence type="ECO:0000256" key="2">
    <source>
        <dbReference type="SAM" id="MobiDB-lite"/>
    </source>
</evidence>
<evidence type="ECO:0000305" key="3"/>
<dbReference type="EMBL" id="CP000961">
    <property type="protein sequence ID" value="ACA88921.1"/>
    <property type="molecule type" value="Genomic_DNA"/>
</dbReference>
<dbReference type="RefSeq" id="WP_012327244.1">
    <property type="nucleotide sequence ID" value="NC_010506.1"/>
</dbReference>
<dbReference type="SMR" id="B1KMW4"/>
<dbReference type="STRING" id="392500.Swoo_4671"/>
<dbReference type="KEGG" id="swd:Swoo_4671"/>
<dbReference type="eggNOG" id="COG0200">
    <property type="taxonomic scope" value="Bacteria"/>
</dbReference>
<dbReference type="HOGENOM" id="CLU_055188_4_2_6"/>
<dbReference type="Proteomes" id="UP000002168">
    <property type="component" value="Chromosome"/>
</dbReference>
<dbReference type="GO" id="GO:0022625">
    <property type="term" value="C:cytosolic large ribosomal subunit"/>
    <property type="evidence" value="ECO:0007669"/>
    <property type="project" value="TreeGrafter"/>
</dbReference>
<dbReference type="GO" id="GO:0019843">
    <property type="term" value="F:rRNA binding"/>
    <property type="evidence" value="ECO:0007669"/>
    <property type="project" value="UniProtKB-UniRule"/>
</dbReference>
<dbReference type="GO" id="GO:0003735">
    <property type="term" value="F:structural constituent of ribosome"/>
    <property type="evidence" value="ECO:0007669"/>
    <property type="project" value="InterPro"/>
</dbReference>
<dbReference type="GO" id="GO:0006412">
    <property type="term" value="P:translation"/>
    <property type="evidence" value="ECO:0007669"/>
    <property type="project" value="UniProtKB-UniRule"/>
</dbReference>
<dbReference type="FunFam" id="3.100.10.10:FF:000003">
    <property type="entry name" value="50S ribosomal protein L15"/>
    <property type="match status" value="1"/>
</dbReference>
<dbReference type="Gene3D" id="3.100.10.10">
    <property type="match status" value="1"/>
</dbReference>
<dbReference type="HAMAP" id="MF_01341">
    <property type="entry name" value="Ribosomal_uL15"/>
    <property type="match status" value="1"/>
</dbReference>
<dbReference type="InterPro" id="IPR030878">
    <property type="entry name" value="Ribosomal_uL15"/>
</dbReference>
<dbReference type="InterPro" id="IPR021131">
    <property type="entry name" value="Ribosomal_uL15/eL18"/>
</dbReference>
<dbReference type="InterPro" id="IPR036227">
    <property type="entry name" value="Ribosomal_uL15/eL18_sf"/>
</dbReference>
<dbReference type="InterPro" id="IPR005749">
    <property type="entry name" value="Ribosomal_uL15_bac-type"/>
</dbReference>
<dbReference type="InterPro" id="IPR001196">
    <property type="entry name" value="Ribosomal_uL15_CS"/>
</dbReference>
<dbReference type="NCBIfam" id="TIGR01071">
    <property type="entry name" value="rplO_bact"/>
    <property type="match status" value="1"/>
</dbReference>
<dbReference type="PANTHER" id="PTHR12934">
    <property type="entry name" value="50S RIBOSOMAL PROTEIN L15"/>
    <property type="match status" value="1"/>
</dbReference>
<dbReference type="PANTHER" id="PTHR12934:SF11">
    <property type="entry name" value="LARGE RIBOSOMAL SUBUNIT PROTEIN UL15M"/>
    <property type="match status" value="1"/>
</dbReference>
<dbReference type="Pfam" id="PF00828">
    <property type="entry name" value="Ribosomal_L27A"/>
    <property type="match status" value="1"/>
</dbReference>
<dbReference type="SUPFAM" id="SSF52080">
    <property type="entry name" value="Ribosomal proteins L15p and L18e"/>
    <property type="match status" value="1"/>
</dbReference>
<dbReference type="PROSITE" id="PS00475">
    <property type="entry name" value="RIBOSOMAL_L15"/>
    <property type="match status" value="1"/>
</dbReference>
<name>RL15_SHEWM</name>
<reference key="1">
    <citation type="submission" date="2008-02" db="EMBL/GenBank/DDBJ databases">
        <title>Complete sequence of Shewanella woodyi ATCC 51908.</title>
        <authorList>
            <consortium name="US DOE Joint Genome Institute"/>
            <person name="Copeland A."/>
            <person name="Lucas S."/>
            <person name="Lapidus A."/>
            <person name="Glavina del Rio T."/>
            <person name="Dalin E."/>
            <person name="Tice H."/>
            <person name="Bruce D."/>
            <person name="Goodwin L."/>
            <person name="Pitluck S."/>
            <person name="Sims D."/>
            <person name="Brettin T."/>
            <person name="Detter J.C."/>
            <person name="Han C."/>
            <person name="Kuske C.R."/>
            <person name="Schmutz J."/>
            <person name="Larimer F."/>
            <person name="Land M."/>
            <person name="Hauser L."/>
            <person name="Kyrpides N."/>
            <person name="Lykidis A."/>
            <person name="Zhao J.-S."/>
            <person name="Richardson P."/>
        </authorList>
    </citation>
    <scope>NUCLEOTIDE SEQUENCE [LARGE SCALE GENOMIC DNA]</scope>
    <source>
        <strain>ATCC 51908 / MS32</strain>
    </source>
</reference>
<sequence>MRLNTLSPAAGSKSAAKRVGRGIGSGTGKTCGRGHKGQKSRSGGGVRIGFEGGQMPLKIRLPKFGFTSRKAMVSAEVRISELAKVNGDVVDLSTLKDANLVTRNIQFAKIVLSGTIERPVTVKGLKVTKGARAAIEAAGGKIEE</sequence>
<comment type="function">
    <text evidence="1">Binds to the 23S rRNA.</text>
</comment>
<comment type="subunit">
    <text evidence="1">Part of the 50S ribosomal subunit.</text>
</comment>
<comment type="similarity">
    <text evidence="1">Belongs to the universal ribosomal protein uL15 family.</text>
</comment>
<accession>B1KMW4</accession>
<organism>
    <name type="scientific">Shewanella woodyi (strain ATCC 51908 / MS32)</name>
    <dbReference type="NCBI Taxonomy" id="392500"/>
    <lineage>
        <taxon>Bacteria</taxon>
        <taxon>Pseudomonadati</taxon>
        <taxon>Pseudomonadota</taxon>
        <taxon>Gammaproteobacteria</taxon>
        <taxon>Alteromonadales</taxon>
        <taxon>Shewanellaceae</taxon>
        <taxon>Shewanella</taxon>
    </lineage>
</organism>